<dbReference type="EC" id="5.1.1.3" evidence="1"/>
<dbReference type="EMBL" id="AL513382">
    <property type="protein sequence ID" value="CAD09499.1"/>
    <property type="status" value="ALT_INIT"/>
    <property type="molecule type" value="Genomic_DNA"/>
</dbReference>
<dbReference type="EMBL" id="AE014613">
    <property type="protein sequence ID" value="AAO71002.1"/>
    <property type="status" value="ALT_INIT"/>
    <property type="molecule type" value="Genomic_DNA"/>
</dbReference>
<dbReference type="PIR" id="AI0934">
    <property type="entry name" value="AI0934"/>
</dbReference>
<dbReference type="RefSeq" id="NP_457929.3">
    <property type="nucleotide sequence ID" value="NC_003198.1"/>
</dbReference>
<dbReference type="RefSeq" id="WP_000201804.1">
    <property type="nucleotide sequence ID" value="NZ_WSUR01000010.1"/>
</dbReference>
<dbReference type="SMR" id="Q8Z315"/>
<dbReference type="STRING" id="220341.gene:17587609"/>
<dbReference type="KEGG" id="stt:t3494"/>
<dbReference type="KEGG" id="sty:STY3743"/>
<dbReference type="PATRIC" id="fig|220341.7.peg.3818"/>
<dbReference type="eggNOG" id="COG0796">
    <property type="taxonomic scope" value="Bacteria"/>
</dbReference>
<dbReference type="HOGENOM" id="CLU_052344_2_0_6"/>
<dbReference type="OMA" id="LDFFKPH"/>
<dbReference type="OrthoDB" id="9801055at2"/>
<dbReference type="UniPathway" id="UPA00219"/>
<dbReference type="Proteomes" id="UP000000541">
    <property type="component" value="Chromosome"/>
</dbReference>
<dbReference type="Proteomes" id="UP000002670">
    <property type="component" value="Chromosome"/>
</dbReference>
<dbReference type="GO" id="GO:0008881">
    <property type="term" value="F:glutamate racemase activity"/>
    <property type="evidence" value="ECO:0007669"/>
    <property type="project" value="UniProtKB-UniRule"/>
</dbReference>
<dbReference type="GO" id="GO:0071555">
    <property type="term" value="P:cell wall organization"/>
    <property type="evidence" value="ECO:0007669"/>
    <property type="project" value="UniProtKB-KW"/>
</dbReference>
<dbReference type="GO" id="GO:0009252">
    <property type="term" value="P:peptidoglycan biosynthetic process"/>
    <property type="evidence" value="ECO:0007669"/>
    <property type="project" value="UniProtKB-UniRule"/>
</dbReference>
<dbReference type="GO" id="GO:0008360">
    <property type="term" value="P:regulation of cell shape"/>
    <property type="evidence" value="ECO:0007669"/>
    <property type="project" value="UniProtKB-KW"/>
</dbReference>
<dbReference type="FunFam" id="3.40.50.1860:FF:000002">
    <property type="entry name" value="Glutamate racemase"/>
    <property type="match status" value="1"/>
</dbReference>
<dbReference type="Gene3D" id="3.40.50.1860">
    <property type="match status" value="2"/>
</dbReference>
<dbReference type="HAMAP" id="MF_00258">
    <property type="entry name" value="Glu_racemase"/>
    <property type="match status" value="1"/>
</dbReference>
<dbReference type="InterPro" id="IPR015942">
    <property type="entry name" value="Asp/Glu/hydantoin_racemase"/>
</dbReference>
<dbReference type="InterPro" id="IPR001920">
    <property type="entry name" value="Asp/Glu_race"/>
</dbReference>
<dbReference type="InterPro" id="IPR018187">
    <property type="entry name" value="Asp/Glu_racemase_AS_1"/>
</dbReference>
<dbReference type="InterPro" id="IPR033134">
    <property type="entry name" value="Asp/Glu_racemase_AS_2"/>
</dbReference>
<dbReference type="InterPro" id="IPR004391">
    <property type="entry name" value="Glu_race"/>
</dbReference>
<dbReference type="NCBIfam" id="TIGR00067">
    <property type="entry name" value="glut_race"/>
    <property type="match status" value="1"/>
</dbReference>
<dbReference type="NCBIfam" id="NF002034">
    <property type="entry name" value="PRK00865.1-1"/>
    <property type="match status" value="1"/>
</dbReference>
<dbReference type="PANTHER" id="PTHR21198">
    <property type="entry name" value="GLUTAMATE RACEMASE"/>
    <property type="match status" value="1"/>
</dbReference>
<dbReference type="PANTHER" id="PTHR21198:SF2">
    <property type="entry name" value="GLUTAMATE RACEMASE"/>
    <property type="match status" value="1"/>
</dbReference>
<dbReference type="Pfam" id="PF01177">
    <property type="entry name" value="Asp_Glu_race"/>
    <property type="match status" value="1"/>
</dbReference>
<dbReference type="SUPFAM" id="SSF53681">
    <property type="entry name" value="Aspartate/glutamate racemase"/>
    <property type="match status" value="2"/>
</dbReference>
<dbReference type="PROSITE" id="PS00923">
    <property type="entry name" value="ASP_GLU_RACEMASE_1"/>
    <property type="match status" value="1"/>
</dbReference>
<dbReference type="PROSITE" id="PS00924">
    <property type="entry name" value="ASP_GLU_RACEMASE_2"/>
    <property type="match status" value="1"/>
</dbReference>
<proteinExistence type="inferred from homology"/>
<keyword id="KW-0133">Cell shape</keyword>
<keyword id="KW-0961">Cell wall biogenesis/degradation</keyword>
<keyword id="KW-0413">Isomerase</keyword>
<keyword id="KW-0573">Peptidoglycan synthesis</keyword>
<accession>Q8Z315</accession>
<protein>
    <recommendedName>
        <fullName evidence="1">Glutamate racemase</fullName>
        <ecNumber evidence="1">5.1.1.3</ecNumber>
    </recommendedName>
</protein>
<sequence>MATKLQDENTPCLAATPSEPRPTVLVFDSGVGGLSVYDEIRRLLPDLHYIYAFDNVAFPYGEKSETFIVERVVEIVTAVQQRYPLSLAVIACNTASTVSLPALREKFAFPVVGVVPAIKPAARLTANGVVGLLATRATVKRPYTHELIARFANECQIAMLGSAELVELAEAKLHGDSVSLEELRRILRPWLRMPEPPDTVVLGCTHFPLLRDELLQVLPEGTRLVDSGAAIARRTAWLLEHEAPDAKSTDANIAYCMAMTPGAEQLLPVLQRYGFETLEKLAV</sequence>
<comment type="function">
    <text evidence="1">Provides the (R)-glutamate required for cell wall biosynthesis.</text>
</comment>
<comment type="catalytic activity">
    <reaction evidence="1">
        <text>L-glutamate = D-glutamate</text>
        <dbReference type="Rhea" id="RHEA:12813"/>
        <dbReference type="ChEBI" id="CHEBI:29985"/>
        <dbReference type="ChEBI" id="CHEBI:29986"/>
        <dbReference type="EC" id="5.1.1.3"/>
    </reaction>
</comment>
<comment type="pathway">
    <text evidence="1">Cell wall biogenesis; peptidoglycan biosynthesis.</text>
</comment>
<comment type="similarity">
    <text evidence="1">Belongs to the aspartate/glutamate racemases family.</text>
</comment>
<comment type="sequence caution" evidence="2">
    <conflict type="erroneous initiation">
        <sequence resource="EMBL-CDS" id="AAO71002"/>
    </conflict>
</comment>
<comment type="sequence caution" evidence="2">
    <conflict type="erroneous initiation">
        <sequence resource="EMBL-CDS" id="CAD09499"/>
    </conflict>
</comment>
<organism>
    <name type="scientific">Salmonella typhi</name>
    <dbReference type="NCBI Taxonomy" id="90370"/>
    <lineage>
        <taxon>Bacteria</taxon>
        <taxon>Pseudomonadati</taxon>
        <taxon>Pseudomonadota</taxon>
        <taxon>Gammaproteobacteria</taxon>
        <taxon>Enterobacterales</taxon>
        <taxon>Enterobacteriaceae</taxon>
        <taxon>Salmonella</taxon>
    </lineage>
</organism>
<gene>
    <name evidence="1" type="primary">murI</name>
    <name type="ordered locus">STY3743</name>
    <name type="ordered locus">t3494</name>
</gene>
<evidence type="ECO:0000255" key="1">
    <source>
        <dbReference type="HAMAP-Rule" id="MF_00258"/>
    </source>
</evidence>
<evidence type="ECO:0000305" key="2"/>
<feature type="chain" id="PRO_0000095503" description="Glutamate racemase">
    <location>
        <begin position="1"/>
        <end position="283"/>
    </location>
</feature>
<feature type="active site" description="Proton donor/acceptor" evidence="1">
    <location>
        <position position="92"/>
    </location>
</feature>
<feature type="active site" description="Proton donor/acceptor" evidence="1">
    <location>
        <position position="204"/>
    </location>
</feature>
<feature type="binding site" evidence="1">
    <location>
        <begin position="28"/>
        <end position="29"/>
    </location>
    <ligand>
        <name>substrate</name>
    </ligand>
</feature>
<feature type="binding site" evidence="1">
    <location>
        <begin position="60"/>
        <end position="61"/>
    </location>
    <ligand>
        <name>substrate</name>
    </ligand>
</feature>
<feature type="binding site" evidence="1">
    <location>
        <begin position="93"/>
        <end position="94"/>
    </location>
    <ligand>
        <name>substrate</name>
    </ligand>
</feature>
<feature type="binding site" evidence="1">
    <location>
        <begin position="205"/>
        <end position="206"/>
    </location>
    <ligand>
        <name>substrate</name>
    </ligand>
</feature>
<reference key="1">
    <citation type="journal article" date="2001" name="Nature">
        <title>Complete genome sequence of a multiple drug resistant Salmonella enterica serovar Typhi CT18.</title>
        <authorList>
            <person name="Parkhill J."/>
            <person name="Dougan G."/>
            <person name="James K.D."/>
            <person name="Thomson N.R."/>
            <person name="Pickard D."/>
            <person name="Wain J."/>
            <person name="Churcher C.M."/>
            <person name="Mungall K.L."/>
            <person name="Bentley S.D."/>
            <person name="Holden M.T.G."/>
            <person name="Sebaihia M."/>
            <person name="Baker S."/>
            <person name="Basham D."/>
            <person name="Brooks K."/>
            <person name="Chillingworth T."/>
            <person name="Connerton P."/>
            <person name="Cronin A."/>
            <person name="Davis P."/>
            <person name="Davies R.M."/>
            <person name="Dowd L."/>
            <person name="White N."/>
            <person name="Farrar J."/>
            <person name="Feltwell T."/>
            <person name="Hamlin N."/>
            <person name="Haque A."/>
            <person name="Hien T.T."/>
            <person name="Holroyd S."/>
            <person name="Jagels K."/>
            <person name="Krogh A."/>
            <person name="Larsen T.S."/>
            <person name="Leather S."/>
            <person name="Moule S."/>
            <person name="O'Gaora P."/>
            <person name="Parry C."/>
            <person name="Quail M.A."/>
            <person name="Rutherford K.M."/>
            <person name="Simmonds M."/>
            <person name="Skelton J."/>
            <person name="Stevens K."/>
            <person name="Whitehead S."/>
            <person name="Barrell B.G."/>
        </authorList>
    </citation>
    <scope>NUCLEOTIDE SEQUENCE [LARGE SCALE GENOMIC DNA]</scope>
    <source>
        <strain>CT18</strain>
    </source>
</reference>
<reference key="2">
    <citation type="journal article" date="2003" name="J. Bacteriol.">
        <title>Comparative genomics of Salmonella enterica serovar Typhi strains Ty2 and CT18.</title>
        <authorList>
            <person name="Deng W."/>
            <person name="Liou S.-R."/>
            <person name="Plunkett G. III"/>
            <person name="Mayhew G.F."/>
            <person name="Rose D.J."/>
            <person name="Burland V."/>
            <person name="Kodoyianni V."/>
            <person name="Schwartz D.C."/>
            <person name="Blattner F.R."/>
        </authorList>
    </citation>
    <scope>NUCLEOTIDE SEQUENCE [LARGE SCALE GENOMIC DNA]</scope>
    <source>
        <strain>ATCC 700931 / Ty2</strain>
    </source>
</reference>
<name>MURI_SALTI</name>